<evidence type="ECO:0000256" key="1">
    <source>
        <dbReference type="SAM" id="MobiDB-lite"/>
    </source>
</evidence>
<keyword id="KW-1267">Proteomics identification</keyword>
<keyword id="KW-1185">Reference proteome</keyword>
<dbReference type="EMBL" id="AC008694">
    <property type="status" value="NOT_ANNOTATED_CDS"/>
    <property type="molecule type" value="Genomic_DNA"/>
</dbReference>
<dbReference type="EMBL" id="BG721329">
    <property type="status" value="NOT_ANNOTATED_CDS"/>
    <property type="molecule type" value="mRNA"/>
</dbReference>
<dbReference type="CCDS" id="CCDS47329.1"/>
<dbReference type="RefSeq" id="NP_001138604.1">
    <property type="nucleotide sequence ID" value="NM_001145132.2"/>
</dbReference>
<dbReference type="RefSeq" id="XP_011532718.1">
    <property type="nucleotide sequence ID" value="XM_011534416.3"/>
</dbReference>
<dbReference type="RefSeq" id="XP_054207349.1">
    <property type="nucleotide sequence ID" value="XM_054351374.1"/>
</dbReference>
<dbReference type="SMR" id="A6NGY3"/>
<dbReference type="STRING" id="9606.ENSP00000387027"/>
<dbReference type="GlyGen" id="A6NGY3">
    <property type="glycosylation" value="1 site, 1 O-linked glycan (1 site)"/>
</dbReference>
<dbReference type="iPTMnet" id="A6NGY3"/>
<dbReference type="PhosphoSitePlus" id="A6NGY3"/>
<dbReference type="BioMuta" id="C5orf52"/>
<dbReference type="MassIVE" id="A6NGY3"/>
<dbReference type="PaxDb" id="9606-ENSP00000387027"/>
<dbReference type="PeptideAtlas" id="A6NGY3"/>
<dbReference type="ProteomicsDB" id="1164"/>
<dbReference type="Antibodypedia" id="63557">
    <property type="antibodies" value="2 antibodies from 2 providers"/>
</dbReference>
<dbReference type="DNASU" id="100190949"/>
<dbReference type="Ensembl" id="ENST00000409999.4">
    <property type="protein sequence ID" value="ENSP00000387027.3"/>
    <property type="gene ID" value="ENSG00000187658.7"/>
</dbReference>
<dbReference type="GeneID" id="100190949"/>
<dbReference type="KEGG" id="hsa:100190949"/>
<dbReference type="MANE-Select" id="ENST00000409999.4">
    <property type="protein sequence ID" value="ENSP00000387027.3"/>
    <property type="RefSeq nucleotide sequence ID" value="NM_001145132.2"/>
    <property type="RefSeq protein sequence ID" value="NP_001138604.1"/>
</dbReference>
<dbReference type="UCSC" id="uc011ddt.3">
    <property type="organism name" value="human"/>
</dbReference>
<dbReference type="AGR" id="HGNC:35121"/>
<dbReference type="CTD" id="100190949"/>
<dbReference type="DisGeNET" id="100190949"/>
<dbReference type="GeneCards" id="C5orf52"/>
<dbReference type="HGNC" id="HGNC:35121">
    <property type="gene designation" value="C5orf52"/>
</dbReference>
<dbReference type="HPA" id="ENSG00000187658">
    <property type="expression patterns" value="Tissue enriched (testis)"/>
</dbReference>
<dbReference type="neXtProt" id="NX_A6NGY3"/>
<dbReference type="OpenTargets" id="ENSG00000187658"/>
<dbReference type="PharmGKB" id="PA164717340"/>
<dbReference type="VEuPathDB" id="HostDB:ENSG00000187658"/>
<dbReference type="eggNOG" id="ENOG502SDG0">
    <property type="taxonomic scope" value="Eukaryota"/>
</dbReference>
<dbReference type="GeneTree" id="ENSGT00390000011578"/>
<dbReference type="HOGENOM" id="CLU_116339_0_0_1"/>
<dbReference type="InParanoid" id="A6NGY3"/>
<dbReference type="OMA" id="RKMSHLY"/>
<dbReference type="OrthoDB" id="9834990at2759"/>
<dbReference type="PAN-GO" id="A6NGY3">
    <property type="GO annotations" value="0 GO annotations based on evolutionary models"/>
</dbReference>
<dbReference type="PhylomeDB" id="A6NGY3"/>
<dbReference type="TreeFam" id="TF338723"/>
<dbReference type="PathwayCommons" id="A6NGY3"/>
<dbReference type="SignaLink" id="A6NGY3"/>
<dbReference type="BioGRID-ORCS" id="100190949">
    <property type="hits" value="10 hits in 1116 CRISPR screens"/>
</dbReference>
<dbReference type="GenomeRNAi" id="100190949"/>
<dbReference type="Pharos" id="A6NGY3">
    <property type="development level" value="Tdark"/>
</dbReference>
<dbReference type="PRO" id="PR:A6NGY3"/>
<dbReference type="Proteomes" id="UP000005640">
    <property type="component" value="Chromosome 5"/>
</dbReference>
<dbReference type="RNAct" id="A6NGY3">
    <property type="molecule type" value="protein"/>
</dbReference>
<dbReference type="Bgee" id="ENSG00000187658">
    <property type="expression patterns" value="Expressed in left testis and 34 other cell types or tissues"/>
</dbReference>
<dbReference type="InterPro" id="IPR038935">
    <property type="entry name" value="C5orf52"/>
</dbReference>
<dbReference type="PANTHER" id="PTHR35666">
    <property type="entry name" value="SIMILAR TO RIKEN CDNA 4921536K21"/>
    <property type="match status" value="1"/>
</dbReference>
<dbReference type="PANTHER" id="PTHR35666:SF1">
    <property type="entry name" value="SIMILAR TO RIKEN CDNA 4921536K21"/>
    <property type="match status" value="1"/>
</dbReference>
<dbReference type="Pfam" id="PF17666">
    <property type="entry name" value="DUF5528"/>
    <property type="match status" value="1"/>
</dbReference>
<sequence>MTQPTRPSVTCDQGSSTIGGTAAQATTSSSATSGSNYQRDRLGRRPEIGVGGQPQICFPRPRSAQQPVLFSLMNSSEAAMKKTLPKSHLSRVIIHDNRITQRIYEMEVSALEKTKKKISHYYEHLKKKFMTEQLRKLGRWREESVNSNRYLTFGIPPPV</sequence>
<gene>
    <name type="primary">C5orf52</name>
</gene>
<organism>
    <name type="scientific">Homo sapiens</name>
    <name type="common">Human</name>
    <dbReference type="NCBI Taxonomy" id="9606"/>
    <lineage>
        <taxon>Eukaryota</taxon>
        <taxon>Metazoa</taxon>
        <taxon>Chordata</taxon>
        <taxon>Craniata</taxon>
        <taxon>Vertebrata</taxon>
        <taxon>Euteleostomi</taxon>
        <taxon>Mammalia</taxon>
        <taxon>Eutheria</taxon>
        <taxon>Euarchontoglires</taxon>
        <taxon>Primates</taxon>
        <taxon>Haplorrhini</taxon>
        <taxon>Catarrhini</taxon>
        <taxon>Hominidae</taxon>
        <taxon>Homo</taxon>
    </lineage>
</organism>
<name>CE052_HUMAN</name>
<accession>A6NGY3</accession>
<protein>
    <recommendedName>
        <fullName>Uncharacterized protein C5orf52</fullName>
    </recommendedName>
</protein>
<reference key="1">
    <citation type="journal article" date="2004" name="Nature">
        <title>The DNA sequence and comparative analysis of human chromosome 5.</title>
        <authorList>
            <person name="Schmutz J."/>
            <person name="Martin J."/>
            <person name="Terry A."/>
            <person name="Couronne O."/>
            <person name="Grimwood J."/>
            <person name="Lowry S."/>
            <person name="Gordon L.A."/>
            <person name="Scott D."/>
            <person name="Xie G."/>
            <person name="Huang W."/>
            <person name="Hellsten U."/>
            <person name="Tran-Gyamfi M."/>
            <person name="She X."/>
            <person name="Prabhakar S."/>
            <person name="Aerts A."/>
            <person name="Altherr M."/>
            <person name="Bajorek E."/>
            <person name="Black S."/>
            <person name="Branscomb E."/>
            <person name="Caoile C."/>
            <person name="Challacombe J.F."/>
            <person name="Chan Y.M."/>
            <person name="Denys M."/>
            <person name="Detter J.C."/>
            <person name="Escobar J."/>
            <person name="Flowers D."/>
            <person name="Fotopulos D."/>
            <person name="Glavina T."/>
            <person name="Gomez M."/>
            <person name="Gonzales E."/>
            <person name="Goodstein D."/>
            <person name="Grigoriev I."/>
            <person name="Groza M."/>
            <person name="Hammon N."/>
            <person name="Hawkins T."/>
            <person name="Haydu L."/>
            <person name="Israni S."/>
            <person name="Jett J."/>
            <person name="Kadner K."/>
            <person name="Kimball H."/>
            <person name="Kobayashi A."/>
            <person name="Lopez F."/>
            <person name="Lou Y."/>
            <person name="Martinez D."/>
            <person name="Medina C."/>
            <person name="Morgan J."/>
            <person name="Nandkeshwar R."/>
            <person name="Noonan J.P."/>
            <person name="Pitluck S."/>
            <person name="Pollard M."/>
            <person name="Predki P."/>
            <person name="Priest J."/>
            <person name="Ramirez L."/>
            <person name="Retterer J."/>
            <person name="Rodriguez A."/>
            <person name="Rogers S."/>
            <person name="Salamov A."/>
            <person name="Salazar A."/>
            <person name="Thayer N."/>
            <person name="Tice H."/>
            <person name="Tsai M."/>
            <person name="Ustaszewska A."/>
            <person name="Vo N."/>
            <person name="Wheeler J."/>
            <person name="Wu K."/>
            <person name="Yang J."/>
            <person name="Dickson M."/>
            <person name="Cheng J.-F."/>
            <person name="Eichler E.E."/>
            <person name="Olsen A."/>
            <person name="Pennacchio L.A."/>
            <person name="Rokhsar D.S."/>
            <person name="Richardson P."/>
            <person name="Lucas S.M."/>
            <person name="Myers R.M."/>
            <person name="Rubin E.M."/>
        </authorList>
    </citation>
    <scope>NUCLEOTIDE SEQUENCE [LARGE SCALE GENOMIC DNA]</scope>
</reference>
<reference key="2">
    <citation type="journal article" date="2004" name="Genome Res.">
        <title>The status, quality, and expansion of the NIH full-length cDNA project: the Mammalian Gene Collection (MGC).</title>
        <authorList>
            <consortium name="The MGC Project Team"/>
        </authorList>
    </citation>
    <scope>NUCLEOTIDE SEQUENCE [LARGE SCALE MRNA] OF 41-159</scope>
    <source>
        <tissue>Testis</tissue>
    </source>
</reference>
<proteinExistence type="evidence at protein level"/>
<feature type="chain" id="PRO_0000341210" description="Uncharacterized protein C5orf52">
    <location>
        <begin position="1"/>
        <end position="159"/>
    </location>
</feature>
<feature type="region of interest" description="Disordered" evidence="1">
    <location>
        <begin position="1"/>
        <end position="57"/>
    </location>
</feature>
<feature type="compositionally biased region" description="Polar residues" evidence="1">
    <location>
        <begin position="1"/>
        <end position="13"/>
    </location>
</feature>
<feature type="compositionally biased region" description="Low complexity" evidence="1">
    <location>
        <begin position="14"/>
        <end position="35"/>
    </location>
</feature>
<feature type="compositionally biased region" description="Basic and acidic residues" evidence="1">
    <location>
        <begin position="38"/>
        <end position="47"/>
    </location>
</feature>